<feature type="chain" id="PRO_0000209263" description="Bifunctional glutamine synthetase adenylyltransferase/adenylyl-removing enzyme">
    <location>
        <begin position="1"/>
        <end position="986"/>
    </location>
</feature>
<feature type="region of interest" description="Adenylyl removase" evidence="1">
    <location>
        <begin position="1"/>
        <end position="475"/>
    </location>
</feature>
<feature type="region of interest" description="Adenylyl transferase" evidence="1">
    <location>
        <begin position="481"/>
        <end position="986"/>
    </location>
</feature>
<name>GLNE_PASMU</name>
<keyword id="KW-0067">ATP-binding</keyword>
<keyword id="KW-0460">Magnesium</keyword>
<keyword id="KW-0511">Multifunctional enzyme</keyword>
<keyword id="KW-0547">Nucleotide-binding</keyword>
<keyword id="KW-0548">Nucleotidyltransferase</keyword>
<keyword id="KW-1185">Reference proteome</keyword>
<keyword id="KW-0808">Transferase</keyword>
<reference key="1">
    <citation type="journal article" date="2001" name="Proc. Natl. Acad. Sci. U.S.A.">
        <title>Complete genomic sequence of Pasteurella multocida Pm70.</title>
        <authorList>
            <person name="May B.J."/>
            <person name="Zhang Q."/>
            <person name="Li L.L."/>
            <person name="Paustian M.L."/>
            <person name="Whittam T.S."/>
            <person name="Kapur V."/>
        </authorList>
    </citation>
    <scope>NUCLEOTIDE SEQUENCE [LARGE SCALE GENOMIC DNA]</scope>
    <source>
        <strain>Pm70</strain>
    </source>
</reference>
<comment type="function">
    <text evidence="1">Involved in the regulation of glutamine synthetase GlnA, a key enzyme in the process to assimilate ammonia. When cellular nitrogen levels are high, the C-terminal adenylyl transferase (AT) inactivates GlnA by covalent transfer of an adenylyl group from ATP to specific tyrosine residue of GlnA, thus reducing its activity. Conversely, when nitrogen levels are low, the N-terminal adenylyl removase (AR) activates GlnA by removing the adenylyl group by phosphorolysis, increasing its activity. The regulatory region of GlnE binds the signal transduction protein PII (GlnB) which indicates the nitrogen status of the cell.</text>
</comment>
<comment type="catalytic activity">
    <reaction evidence="1">
        <text>[glutamine synthetase]-O(4)-(5'-adenylyl)-L-tyrosine + phosphate = [glutamine synthetase]-L-tyrosine + ADP</text>
        <dbReference type="Rhea" id="RHEA:43716"/>
        <dbReference type="Rhea" id="RHEA-COMP:10660"/>
        <dbReference type="Rhea" id="RHEA-COMP:10661"/>
        <dbReference type="ChEBI" id="CHEBI:43474"/>
        <dbReference type="ChEBI" id="CHEBI:46858"/>
        <dbReference type="ChEBI" id="CHEBI:83624"/>
        <dbReference type="ChEBI" id="CHEBI:456216"/>
        <dbReference type="EC" id="2.7.7.89"/>
    </reaction>
</comment>
<comment type="catalytic activity">
    <reaction evidence="1">
        <text>[glutamine synthetase]-L-tyrosine + ATP = [glutamine synthetase]-O(4)-(5'-adenylyl)-L-tyrosine + diphosphate</text>
        <dbReference type="Rhea" id="RHEA:18589"/>
        <dbReference type="Rhea" id="RHEA-COMP:10660"/>
        <dbReference type="Rhea" id="RHEA-COMP:10661"/>
        <dbReference type="ChEBI" id="CHEBI:30616"/>
        <dbReference type="ChEBI" id="CHEBI:33019"/>
        <dbReference type="ChEBI" id="CHEBI:46858"/>
        <dbReference type="ChEBI" id="CHEBI:83624"/>
        <dbReference type="EC" id="2.7.7.42"/>
    </reaction>
</comment>
<comment type="cofactor">
    <cofactor evidence="1">
        <name>Mg(2+)</name>
        <dbReference type="ChEBI" id="CHEBI:18420"/>
    </cofactor>
</comment>
<comment type="similarity">
    <text evidence="1">Belongs to the GlnE family.</text>
</comment>
<organism>
    <name type="scientific">Pasteurella multocida (strain Pm70)</name>
    <dbReference type="NCBI Taxonomy" id="272843"/>
    <lineage>
        <taxon>Bacteria</taxon>
        <taxon>Pseudomonadati</taxon>
        <taxon>Pseudomonadota</taxon>
        <taxon>Gammaproteobacteria</taxon>
        <taxon>Pasteurellales</taxon>
        <taxon>Pasteurellaceae</taxon>
        <taxon>Pasteurella</taxon>
    </lineage>
</organism>
<accession>Q9CNQ2</accession>
<protein>
    <recommendedName>
        <fullName evidence="1">Bifunctional glutamine synthetase adenylyltransferase/adenylyl-removing enzyme</fullName>
    </recommendedName>
    <alternativeName>
        <fullName evidence="1">ATP:glutamine synthetase adenylyltransferase</fullName>
    </alternativeName>
    <alternativeName>
        <fullName evidence="1">ATase</fullName>
    </alternativeName>
    <domain>
        <recommendedName>
            <fullName evidence="1">Glutamine synthetase adenylyl-L-tyrosine phosphorylase</fullName>
            <ecNumber evidence="1">2.7.7.89</ecNumber>
        </recommendedName>
        <alternativeName>
            <fullName evidence="1">Adenylyl removase</fullName>
            <shortName evidence="1">AR</shortName>
            <shortName evidence="1">AT-N</shortName>
        </alternativeName>
    </domain>
    <domain>
        <recommendedName>
            <fullName evidence="1">Glutamine synthetase adenylyl transferase</fullName>
            <ecNumber evidence="1">2.7.7.42</ecNumber>
        </recommendedName>
        <alternativeName>
            <fullName evidence="1">Adenylyl transferase</fullName>
            <shortName evidence="1">AT</shortName>
            <shortName evidence="1">AT-C</shortName>
        </alternativeName>
    </domain>
</protein>
<proteinExistence type="inferred from homology"/>
<evidence type="ECO:0000255" key="1">
    <source>
        <dbReference type="HAMAP-Rule" id="MF_00802"/>
    </source>
</evidence>
<gene>
    <name evidence="1" type="primary">glnE</name>
    <name type="ordered locus">PM0375</name>
</gene>
<dbReference type="EC" id="2.7.7.89" evidence="1"/>
<dbReference type="EC" id="2.7.7.42" evidence="1"/>
<dbReference type="EMBL" id="AE004439">
    <property type="protein sequence ID" value="AAK02459.1"/>
    <property type="molecule type" value="Genomic_DNA"/>
</dbReference>
<dbReference type="RefSeq" id="WP_010906614.1">
    <property type="nucleotide sequence ID" value="NC_002663.1"/>
</dbReference>
<dbReference type="SMR" id="Q9CNQ2"/>
<dbReference type="STRING" id="272843.PM0375"/>
<dbReference type="EnsemblBacteria" id="AAK02459">
    <property type="protein sequence ID" value="AAK02459"/>
    <property type="gene ID" value="PM0375"/>
</dbReference>
<dbReference type="KEGG" id="pmu:PM0375"/>
<dbReference type="PATRIC" id="fig|272843.6.peg.388"/>
<dbReference type="HOGENOM" id="CLU_006233_0_1_6"/>
<dbReference type="OrthoDB" id="9759366at2"/>
<dbReference type="Proteomes" id="UP000000809">
    <property type="component" value="Chromosome"/>
</dbReference>
<dbReference type="GO" id="GO:0005829">
    <property type="term" value="C:cytosol"/>
    <property type="evidence" value="ECO:0007669"/>
    <property type="project" value="TreeGrafter"/>
</dbReference>
<dbReference type="GO" id="GO:0008882">
    <property type="term" value="F:[glutamate-ammonia-ligase] adenylyltransferase activity"/>
    <property type="evidence" value="ECO:0007669"/>
    <property type="project" value="UniProtKB-UniRule"/>
</dbReference>
<dbReference type="GO" id="GO:0047388">
    <property type="term" value="F:[glutamine synthetase]-adenylyl-L-tyrosine phosphorylase activity"/>
    <property type="evidence" value="ECO:0007669"/>
    <property type="project" value="UniProtKB-EC"/>
</dbReference>
<dbReference type="GO" id="GO:0005524">
    <property type="term" value="F:ATP binding"/>
    <property type="evidence" value="ECO:0007669"/>
    <property type="project" value="UniProtKB-UniRule"/>
</dbReference>
<dbReference type="GO" id="GO:0000287">
    <property type="term" value="F:magnesium ion binding"/>
    <property type="evidence" value="ECO:0007669"/>
    <property type="project" value="UniProtKB-UniRule"/>
</dbReference>
<dbReference type="GO" id="GO:0000820">
    <property type="term" value="P:regulation of glutamine family amino acid metabolic process"/>
    <property type="evidence" value="ECO:0007669"/>
    <property type="project" value="UniProtKB-UniRule"/>
</dbReference>
<dbReference type="CDD" id="cd05401">
    <property type="entry name" value="NT_GlnE_GlnD_like"/>
    <property type="match status" value="2"/>
</dbReference>
<dbReference type="FunFam" id="1.20.120.330:FF:000005">
    <property type="entry name" value="Bifunctional glutamine synthetase adenylyltransferase/adenylyl-removing enzyme"/>
    <property type="match status" value="1"/>
</dbReference>
<dbReference type="FunFam" id="3.30.460.10:FF:000009">
    <property type="entry name" value="Bifunctional glutamine synthetase adenylyltransferase/adenylyl-removing enzyme"/>
    <property type="match status" value="1"/>
</dbReference>
<dbReference type="FunFam" id="3.30.460.10:FF:000014">
    <property type="entry name" value="Bifunctional glutamine synthetase adenylyltransferase/adenylyl-removing enzyme"/>
    <property type="match status" value="1"/>
</dbReference>
<dbReference type="Gene3D" id="1.20.120.1510">
    <property type="match status" value="1"/>
</dbReference>
<dbReference type="Gene3D" id="3.30.460.10">
    <property type="entry name" value="Beta Polymerase, domain 2"/>
    <property type="match status" value="2"/>
</dbReference>
<dbReference type="Gene3D" id="1.10.4050.10">
    <property type="entry name" value="Glutamine synthase adenylyltransferase GlnE"/>
    <property type="match status" value="1"/>
</dbReference>
<dbReference type="Gene3D" id="1.20.120.330">
    <property type="entry name" value="Nucleotidyltransferases domain 2"/>
    <property type="match status" value="2"/>
</dbReference>
<dbReference type="HAMAP" id="MF_00802">
    <property type="entry name" value="GlnE"/>
    <property type="match status" value="1"/>
</dbReference>
<dbReference type="InterPro" id="IPR023057">
    <property type="entry name" value="GlnE"/>
</dbReference>
<dbReference type="InterPro" id="IPR005190">
    <property type="entry name" value="GlnE_rpt_dom"/>
</dbReference>
<dbReference type="InterPro" id="IPR043519">
    <property type="entry name" value="NT_sf"/>
</dbReference>
<dbReference type="InterPro" id="IPR013546">
    <property type="entry name" value="PII_UdlTrfase/GS_AdlTrfase"/>
</dbReference>
<dbReference type="NCBIfam" id="NF008292">
    <property type="entry name" value="PRK11072.1"/>
    <property type="match status" value="1"/>
</dbReference>
<dbReference type="PANTHER" id="PTHR30621:SF0">
    <property type="entry name" value="BIFUNCTIONAL GLUTAMINE SYNTHETASE ADENYLYLTRANSFERASE_ADENYLYL-REMOVING ENZYME"/>
    <property type="match status" value="1"/>
</dbReference>
<dbReference type="PANTHER" id="PTHR30621">
    <property type="entry name" value="GLUTAMINE SYNTHETASE ADENYLYLTRANSFERASE"/>
    <property type="match status" value="1"/>
</dbReference>
<dbReference type="Pfam" id="PF08335">
    <property type="entry name" value="GlnD_UR_UTase"/>
    <property type="match status" value="2"/>
</dbReference>
<dbReference type="Pfam" id="PF03710">
    <property type="entry name" value="GlnE"/>
    <property type="match status" value="2"/>
</dbReference>
<dbReference type="SUPFAM" id="SSF81301">
    <property type="entry name" value="Nucleotidyltransferase"/>
    <property type="match status" value="2"/>
</dbReference>
<dbReference type="SUPFAM" id="SSF81593">
    <property type="entry name" value="Nucleotidyltransferase substrate binding subunit/domain"/>
    <property type="match status" value="2"/>
</dbReference>
<sequence length="986" mass="113973">MSFPLAHVDATLNQLAKQLIAHFPEQYQDQIFQHIATDKEKPTSNIGQLRYAIAMSDFFAETLQKQPHFLHQCWQQCPRLQDCEQYAERLTPLLAQVENEEQLYKVLRQFRHREMAKLSFCQSLNLGSVEDIFIRLSQLAESVIIGARDWLYQRACAEMGTPVDEQGTPLQLYILGMGKLGGFELNFSSDIDLIFTYASNGETVGARRSIDNAKFFTRLGQRLINALDQYTCDGFVYRTDMRLRPFGENGALALSFAAMELYYQEQGRDWERYAMIKGRILGANAQDPHVNTLQQLLRPFVYRRYIDFSVLQALRDMKHKIEREVRRRGLVDNIKLGAGGIREIEFIVQVFQLIRGGRESALQQPALLKVLPEISALELISAQQQEDLRQAYLFLRRTENILQAIHDQQTQQLPENTLDQQRLVLATQRFTQWDTQNKLETVTYPIHDWASFCEVLQQHQQNVRTVFDHLIGEEKEELSETETLWHDFLENEIEESEIEQMLIEHHIEERDFHEIIEKLMQFRNEVTRRPIGTRGRIALTQVMPTLLPQIFAHTAYLHLLPRMLNIVDKILTRTTYLELLVENPQALTQLIELCAQSRMIAEQVARHPILLDELLDRNALLNPPPYDHYASELRQYLLRLTPDDEEQMIDGLRQFKQATLLRIAAADILGALPVMKVSDHLTFLAEAIIHVVVELAWQQVTTRFGTPAHLAEGEKGFLVIGYGKLGGIELGYKSDLDLVFLYQSDEQSQTCGGKRSIESNQFYLRLAQKIISIFSINTFAGVLYEVDMRLRPSGESGLLCSSISAFKAYQLHDAWTWEKQALVRSRAIYGEARLQTEFNAIRAEVLSAPRDLATLQQDVVAMRQKMYAHLAHPDSDTFNIKTDRGGITDIEFIAQYLVLAHAPQNPALTRWSDNVRIFEIMAESAVISQEICDQLKQCYVDLRNRIHHLNLLGELSIVPQTEFQTERQFIQTIWHRLFEHNDKYEE</sequence>